<protein>
    <recommendedName>
        <fullName evidence="2">Polyamine-transporting ATPase 13A2</fullName>
        <ecNumber evidence="2">7.6.2.-</ecNumber>
    </recommendedName>
</protein>
<organism>
    <name type="scientific">Mus musculus</name>
    <name type="common">Mouse</name>
    <dbReference type="NCBI Taxonomy" id="10090"/>
    <lineage>
        <taxon>Eukaryota</taxon>
        <taxon>Metazoa</taxon>
        <taxon>Chordata</taxon>
        <taxon>Craniata</taxon>
        <taxon>Vertebrata</taxon>
        <taxon>Euteleostomi</taxon>
        <taxon>Mammalia</taxon>
        <taxon>Eutheria</taxon>
        <taxon>Euarchontoglires</taxon>
        <taxon>Glires</taxon>
        <taxon>Rodentia</taxon>
        <taxon>Myomorpha</taxon>
        <taxon>Muroidea</taxon>
        <taxon>Muridae</taxon>
        <taxon>Murinae</taxon>
        <taxon>Mus</taxon>
        <taxon>Mus</taxon>
    </lineage>
</organism>
<gene>
    <name evidence="7" type="primary">Atp13a2</name>
</gene>
<evidence type="ECO:0000250" key="1"/>
<evidence type="ECO:0000250" key="2">
    <source>
        <dbReference type="UniProtKB" id="Q9NQ11"/>
    </source>
</evidence>
<evidence type="ECO:0000255" key="3"/>
<evidence type="ECO:0000269" key="4">
    <source>
    </source>
</evidence>
<evidence type="ECO:0000269" key="5">
    <source>
    </source>
</evidence>
<evidence type="ECO:0000305" key="6"/>
<evidence type="ECO:0000312" key="7">
    <source>
        <dbReference type="MGI" id="MGI:1922022"/>
    </source>
</evidence>
<name>AT132_MOUSE</name>
<accession>Q9CTG6</accession>
<accession>A2AA78</accession>
<accession>Q8CG98</accession>
<feature type="chain" id="PRO_0000046424" description="Polyamine-transporting ATPase 13A2">
    <location>
        <begin position="1"/>
        <end position="1169"/>
    </location>
</feature>
<feature type="topological domain" description="Cytoplasmic" evidence="2">
    <location>
        <begin position="1"/>
        <end position="44"/>
    </location>
</feature>
<feature type="intramembrane region" evidence="3">
    <location>
        <begin position="45"/>
        <end position="65"/>
    </location>
</feature>
<feature type="topological domain" description="Cytoplasmic" evidence="2">
    <location>
        <begin position="66"/>
        <end position="225"/>
    </location>
</feature>
<feature type="transmembrane region" description="Helical" evidence="3">
    <location>
        <begin position="226"/>
        <end position="246"/>
    </location>
</feature>
<feature type="topological domain" description="Lumenal" evidence="2">
    <location>
        <begin position="247"/>
        <end position="250"/>
    </location>
</feature>
<feature type="transmembrane region" description="Helical" evidence="3">
    <location>
        <begin position="251"/>
        <end position="271"/>
    </location>
</feature>
<feature type="topological domain" description="Cytoplasmic" evidence="2">
    <location>
        <begin position="272"/>
        <end position="422"/>
    </location>
</feature>
<feature type="transmembrane region" description="Helical" evidence="3">
    <location>
        <begin position="423"/>
        <end position="443"/>
    </location>
</feature>
<feature type="topological domain" description="Lumenal" evidence="2">
    <location>
        <begin position="444"/>
        <end position="458"/>
    </location>
</feature>
<feature type="transmembrane region" description="Helical" evidence="3">
    <location>
        <begin position="459"/>
        <end position="479"/>
    </location>
</feature>
<feature type="topological domain" description="Cytoplasmic" evidence="2">
    <location>
        <begin position="480"/>
        <end position="919"/>
    </location>
</feature>
<feature type="transmembrane region" description="Helical" evidence="3">
    <location>
        <begin position="920"/>
        <end position="940"/>
    </location>
</feature>
<feature type="topological domain" description="Lumenal" evidence="2">
    <location>
        <begin position="941"/>
        <end position="946"/>
    </location>
</feature>
<feature type="transmembrane region" description="Helical" evidence="3">
    <location>
        <begin position="947"/>
        <end position="967"/>
    </location>
</feature>
<feature type="topological domain" description="Cytoplasmic" evidence="2">
    <location>
        <begin position="968"/>
        <end position="993"/>
    </location>
</feature>
<feature type="transmembrane region" description="Helical" evidence="3">
    <location>
        <begin position="994"/>
        <end position="1014"/>
    </location>
</feature>
<feature type="topological domain" description="Lumenal" evidence="2">
    <location>
        <begin position="1015"/>
        <end position="1037"/>
    </location>
</feature>
<feature type="transmembrane region" description="Helical" evidence="3">
    <location>
        <begin position="1038"/>
        <end position="1058"/>
    </location>
</feature>
<feature type="topological domain" description="Cytoplasmic" evidence="2">
    <location>
        <begin position="1059"/>
        <end position="1069"/>
    </location>
</feature>
<feature type="transmembrane region" description="Helical" evidence="3">
    <location>
        <begin position="1070"/>
        <end position="1090"/>
    </location>
</feature>
<feature type="topological domain" description="Lumenal" evidence="2">
    <location>
        <begin position="1091"/>
        <end position="1106"/>
    </location>
</feature>
<feature type="transmembrane region" description="Helical" evidence="3">
    <location>
        <begin position="1107"/>
        <end position="1127"/>
    </location>
</feature>
<feature type="topological domain" description="Cytoplasmic" evidence="2">
    <location>
        <begin position="1128"/>
        <end position="1169"/>
    </location>
</feature>
<feature type="active site" description="4-aspartylphosphate intermediate" evidence="2">
    <location>
        <position position="508"/>
    </location>
</feature>
<feature type="binding site" evidence="1">
    <location>
        <position position="867"/>
    </location>
    <ligand>
        <name>Mg(2+)</name>
        <dbReference type="ChEBI" id="CHEBI:18420"/>
    </ligand>
</feature>
<feature type="binding site" evidence="1">
    <location>
        <position position="871"/>
    </location>
    <ligand>
        <name>Mg(2+)</name>
        <dbReference type="ChEBI" id="CHEBI:18420"/>
    </ligand>
</feature>
<feature type="glycosylation site" description="N-linked (GlcNAc...) asparagine" evidence="3">
    <location>
        <position position="1022"/>
    </location>
</feature>
<feature type="sequence conflict" description="In Ref. 2; AAH42661." evidence="6" ref="2">
    <original>V</original>
    <variation>L</variation>
    <location>
        <position position="112"/>
    </location>
</feature>
<feature type="sequence conflict" description="In Ref. 2; AAH42661." evidence="6" ref="2">
    <original>G</original>
    <variation>S</variation>
    <location>
        <position position="186"/>
    </location>
</feature>
<feature type="sequence conflict" description="In Ref. 2; AAH42661." evidence="6" ref="2">
    <original>I</original>
    <variation>V</variation>
    <location>
        <position position="440"/>
    </location>
</feature>
<feature type="sequence conflict" description="In Ref. 2; AAH42661." evidence="6" ref="2">
    <original>T</original>
    <variation>A</variation>
    <location>
        <position position="485"/>
    </location>
</feature>
<feature type="sequence conflict" description="In Ref. 2; AAH42661." evidence="6" ref="2">
    <original>C</original>
    <variation>R</variation>
    <location>
        <position position="539"/>
    </location>
</feature>
<feature type="sequence conflict" description="In Ref. 2; AAH42661." evidence="6" ref="2">
    <original>A</original>
    <variation>E</variation>
    <location>
        <position position="695"/>
    </location>
</feature>
<feature type="sequence conflict" description="In Ref. 2; AAH42661." evidence="6" ref="2">
    <original>S</original>
    <variation>F</variation>
    <location>
        <position position="809"/>
    </location>
</feature>
<feature type="sequence conflict" description="In Ref. 3; BAB22896." evidence="6" ref="3">
    <original>I</original>
    <variation>V</variation>
    <location>
        <position position="943"/>
    </location>
</feature>
<comment type="function">
    <text evidence="2 4 5">ATPase which acts as a lysosomal polyamine exporter with high affinity for spermine (By similarity). Also stimulates cellular uptake of polyamines and protects against polyamine toxicity (By similarity). Plays a role in intracellular cation homeostasis and the maintenance of neuronal integrity (By similarity). Contributes to cellular zinc homeostasis (By similarity). Confers cellular protection against Mn(2+) and Zn(2+) toxicity and mitochondrial stress (By similarity). Required for proper lysosomal and mitochondrial maintenance (By similarity). Regulates the autophagy-lysosome pathway through the control of SYT11 expression at both transcriptional and post-translational levels (PubMed:27278822). Facilitates recruitment of deacetylase HDAC6 to lysosomes to deacetylate CTTN, leading to actin polymerization, promotion of autophagosome-lysosome fusion and completion of autophagy (PubMed:30538141). Promotes secretion of exosomes as well as secretion of SCNA via exosomes (By similarity). Plays a role in lipid homeostasis (By similarity).</text>
</comment>
<comment type="catalytic activity">
    <reaction evidence="2">
        <text>spermidine(out) + ATP + H2O = spermidine(in) + ADP + phosphate + H(+)</text>
        <dbReference type="Rhea" id="RHEA:29999"/>
        <dbReference type="ChEBI" id="CHEBI:15377"/>
        <dbReference type="ChEBI" id="CHEBI:15378"/>
        <dbReference type="ChEBI" id="CHEBI:30616"/>
        <dbReference type="ChEBI" id="CHEBI:43474"/>
        <dbReference type="ChEBI" id="CHEBI:57834"/>
        <dbReference type="ChEBI" id="CHEBI:456216"/>
    </reaction>
</comment>
<comment type="catalytic activity">
    <reaction evidence="2">
        <text>spermine(out) + ATP + H2O = spermine(in) + ADP + phosphate + H(+)</text>
        <dbReference type="Rhea" id="RHEA:63368"/>
        <dbReference type="ChEBI" id="CHEBI:15377"/>
        <dbReference type="ChEBI" id="CHEBI:15378"/>
        <dbReference type="ChEBI" id="CHEBI:30616"/>
        <dbReference type="ChEBI" id="CHEBI:43474"/>
        <dbReference type="ChEBI" id="CHEBI:45725"/>
        <dbReference type="ChEBI" id="CHEBI:456216"/>
    </reaction>
</comment>
<comment type="activity regulation">
    <text evidence="2">Accumulates in an inactive autophosphorylated state. The presence of spermine results in a dose-dependent reduction in autophosphorylation.</text>
</comment>
<comment type="subunit">
    <text evidence="2">Interacts with MYCBP2; the interaction inhibits the ubiquitination of TSC2 by MYCBP2 (By similarity). Interacts with HDAC6; the interaction results in recruitment of HDAC6 to lysosomes to promote CTTN deacetylation (By similarity).</text>
</comment>
<comment type="subcellular location">
    <subcellularLocation>
        <location evidence="2">Lysosome membrane</location>
        <topology evidence="3">Multi-pass membrane protein</topology>
    </subcellularLocation>
    <subcellularLocation>
        <location evidence="2">Late endosome membrane</location>
        <topology evidence="3">Multi-pass membrane protein</topology>
    </subcellularLocation>
    <subcellularLocation>
        <location evidence="2">Endosome</location>
        <location evidence="2">Multivesicular body membrane</location>
        <topology evidence="3">Multi-pass membrane protein</topology>
    </subcellularLocation>
    <subcellularLocation>
        <location evidence="2">Cytoplasmic vesicle</location>
        <location evidence="2">Autophagosome membrane</location>
        <topology evidence="3">Multi-pass membrane protein</topology>
    </subcellularLocation>
</comment>
<comment type="domain">
    <text evidence="2">The N-terminal region is required for targeting to late endosomes/lysosomes. It does not traverse the membrane but contains a membrane-embedded intramembrane domain and interacts with the lipids phosphatidic acid (PA) and phosphatidylinositol 3,5-bisphosphate (PI(3,5)P2). PA and PI(3,5)P2 are required for the protective effect against mitochondrial stress.</text>
</comment>
<comment type="PTM">
    <text evidence="2">Autophosphorylated. Accumulates in an inactive autophosphorylated state and autophosphorylation is stimulated by phosphatidic acid and phosphatidylinositol 3,5-bisphosphate but not by Mn(2+) or Zn(2+). The presence of spermine results in a dose-dependent reduction in autophosphorylation.</text>
</comment>
<comment type="disruption phenotype">
    <text evidence="5">No visible phenotype at 4 months (PubMed:30538141). At 10 months, gradual loss of body weight, increased liver size and reduced adipose tissue mass (PubMed:30538141). These phenotypes further progress to 18 months with significantly smaller body size, hepatomegaly, increased intracellular vacuolation in liver tissues, markedly reduced adipose tissue with small adipocytes, accumulation of autophagy receptor Sqstm1/p62 and autophagy-related protein LC3 in liver, and accumulation of ubiquitinated insoluble proteins (PubMed:30538141).</text>
</comment>
<comment type="similarity">
    <text evidence="6">Belongs to the cation transport ATPase (P-type) (TC 3.A.3) family. Type V subfamily.</text>
</comment>
<sequence length="1169" mass="126443">MSADSSLLMGSTPPSYGTLTTGTSIDPLSSSASSVRLSGYCGSPWRAIGYHAAVWMLAGIPWLLFRWKPLWGVRLRLKPCSLAHAETLVIEIKDKEGSSRQLFTVQVQTEAVVQGSLELPPQAQAEDGRSQAAVGVTPEGTWQDTSELHRQEEAKQVLRYYVLQGQRYVWMETQQAFCQVSLLDHGRTCDDVHCSSSGLSLQDQATRKTIYGPNVISIPVKSYLQLLADEALNPYYGFQAFSIALWLADHYYWYALCIFLISAISICLALYKTRKQSLTLRDMVKLSVRVQVCRPGGEEEWVDSSELVPGDCLVLPQEGGVMPCDAALVAGECVVNESSLTGESTPVLKTALPEGPKPYCPETHRRHTLFCGTLILQARAYVGPRVLAVVTRTGFCTAKGGLVSSILHPRPISFKFYKHSMKFVAALSVLALLGTVYSIIILYRNRVPVREIVIRALDLVTVVVPPALPAAMTVCTLYAQSRLRTQGIFCIHPLRINLGGKLRLVCFDKTGTLTEDGLDVMGVVPLKGQVLLPLVPEPCHLPLGPLLRALATCHALSQLHDTPVGDPMDLKMVESTGWVLEEGPAAGSAPGSQVLVVMRPPPGGPRQQEEPPVPVSVLCRFPFSSALQRMDVVVTWPGATQPEAYVKGSPELVASLCSPETVPSDFSQVLQSYTAAGYRVVALAGKPLPIAPSLAAAQQLTRDTVERELSLLGLLVMRNLLKPQTAPVIQTLRKTGIRTVMVTGDNLQTAVTVARACGMVGAQEHLAVIHATHPEQGQPAALEFLPTESSAVMNGAKATGYPTVPEPQSCHLALSGSTFAVLRKHFPKLLPKVLVQATVFARMAPEQKTELVCELQRLQYCVGMCGDGANDCGALKAADVGISLSQAEASVVSPFTSSMASIECVPTVIREGRCSLDTSFSVFKYMALYSLTQFISVLILYTINTNLGDLQFLAIDLVITTTVAVLMSRTGPALTLVRARPPGALLSVPVLGSLLLQVALVAGIQLGGYFLVIAQPWFVPLNRTVPAPDNLPNYENTVVFSLSGFQYLILAAAVSKGAPFRQPLYTNVPFLVALALLGSVLVGLILVPGLLQGPLGLRNIVDSSFKLLLLGLVAFNFVGAFMLESVLDQCLPACLRWLRPKRASKKQFKRLQQELAEHPWPTLPVGSVR</sequence>
<reference key="1">
    <citation type="journal article" date="2009" name="PLoS Biol.">
        <title>Lineage-specific biology revealed by a finished genome assembly of the mouse.</title>
        <authorList>
            <person name="Church D.M."/>
            <person name="Goodstadt L."/>
            <person name="Hillier L.W."/>
            <person name="Zody M.C."/>
            <person name="Goldstein S."/>
            <person name="She X."/>
            <person name="Bult C.J."/>
            <person name="Agarwala R."/>
            <person name="Cherry J.L."/>
            <person name="DiCuccio M."/>
            <person name="Hlavina W."/>
            <person name="Kapustin Y."/>
            <person name="Meric P."/>
            <person name="Maglott D."/>
            <person name="Birtle Z."/>
            <person name="Marques A.C."/>
            <person name="Graves T."/>
            <person name="Zhou S."/>
            <person name="Teague B."/>
            <person name="Potamousis K."/>
            <person name="Churas C."/>
            <person name="Place M."/>
            <person name="Herschleb J."/>
            <person name="Runnheim R."/>
            <person name="Forrest D."/>
            <person name="Amos-Landgraf J."/>
            <person name="Schwartz D.C."/>
            <person name="Cheng Z."/>
            <person name="Lindblad-Toh K."/>
            <person name="Eichler E.E."/>
            <person name="Ponting C.P."/>
        </authorList>
    </citation>
    <scope>NUCLEOTIDE SEQUENCE [LARGE SCALE GENOMIC DNA]</scope>
    <source>
        <strain>C57BL/6J</strain>
    </source>
</reference>
<reference key="2">
    <citation type="journal article" date="2004" name="Genome Res.">
        <title>The status, quality, and expansion of the NIH full-length cDNA project: the Mammalian Gene Collection (MGC).</title>
        <authorList>
            <consortium name="The MGC Project Team"/>
        </authorList>
    </citation>
    <scope>NUCLEOTIDE SEQUENCE [LARGE SCALE MRNA]</scope>
    <source>
        <strain>FVB/N</strain>
        <tissue>Salivary gland</tissue>
    </source>
</reference>
<reference key="3">
    <citation type="journal article" date="2005" name="Science">
        <title>The transcriptional landscape of the mammalian genome.</title>
        <authorList>
            <person name="Carninci P."/>
            <person name="Kasukawa T."/>
            <person name="Katayama S."/>
            <person name="Gough J."/>
            <person name="Frith M.C."/>
            <person name="Maeda N."/>
            <person name="Oyama R."/>
            <person name="Ravasi T."/>
            <person name="Lenhard B."/>
            <person name="Wells C."/>
            <person name="Kodzius R."/>
            <person name="Shimokawa K."/>
            <person name="Bajic V.B."/>
            <person name="Brenner S.E."/>
            <person name="Batalov S."/>
            <person name="Forrest A.R."/>
            <person name="Zavolan M."/>
            <person name="Davis M.J."/>
            <person name="Wilming L.G."/>
            <person name="Aidinis V."/>
            <person name="Allen J.E."/>
            <person name="Ambesi-Impiombato A."/>
            <person name="Apweiler R."/>
            <person name="Aturaliya R.N."/>
            <person name="Bailey T.L."/>
            <person name="Bansal M."/>
            <person name="Baxter L."/>
            <person name="Beisel K.W."/>
            <person name="Bersano T."/>
            <person name="Bono H."/>
            <person name="Chalk A.M."/>
            <person name="Chiu K.P."/>
            <person name="Choudhary V."/>
            <person name="Christoffels A."/>
            <person name="Clutterbuck D.R."/>
            <person name="Crowe M.L."/>
            <person name="Dalla E."/>
            <person name="Dalrymple B.P."/>
            <person name="de Bono B."/>
            <person name="Della Gatta G."/>
            <person name="di Bernardo D."/>
            <person name="Down T."/>
            <person name="Engstrom P."/>
            <person name="Fagiolini M."/>
            <person name="Faulkner G."/>
            <person name="Fletcher C.F."/>
            <person name="Fukushima T."/>
            <person name="Furuno M."/>
            <person name="Futaki S."/>
            <person name="Gariboldi M."/>
            <person name="Georgii-Hemming P."/>
            <person name="Gingeras T.R."/>
            <person name="Gojobori T."/>
            <person name="Green R.E."/>
            <person name="Gustincich S."/>
            <person name="Harbers M."/>
            <person name="Hayashi Y."/>
            <person name="Hensch T.K."/>
            <person name="Hirokawa N."/>
            <person name="Hill D."/>
            <person name="Huminiecki L."/>
            <person name="Iacono M."/>
            <person name="Ikeo K."/>
            <person name="Iwama A."/>
            <person name="Ishikawa T."/>
            <person name="Jakt M."/>
            <person name="Kanapin A."/>
            <person name="Katoh M."/>
            <person name="Kawasawa Y."/>
            <person name="Kelso J."/>
            <person name="Kitamura H."/>
            <person name="Kitano H."/>
            <person name="Kollias G."/>
            <person name="Krishnan S.P."/>
            <person name="Kruger A."/>
            <person name="Kummerfeld S.K."/>
            <person name="Kurochkin I.V."/>
            <person name="Lareau L.F."/>
            <person name="Lazarevic D."/>
            <person name="Lipovich L."/>
            <person name="Liu J."/>
            <person name="Liuni S."/>
            <person name="McWilliam S."/>
            <person name="Madan Babu M."/>
            <person name="Madera M."/>
            <person name="Marchionni L."/>
            <person name="Matsuda H."/>
            <person name="Matsuzawa S."/>
            <person name="Miki H."/>
            <person name="Mignone F."/>
            <person name="Miyake S."/>
            <person name="Morris K."/>
            <person name="Mottagui-Tabar S."/>
            <person name="Mulder N."/>
            <person name="Nakano N."/>
            <person name="Nakauchi H."/>
            <person name="Ng P."/>
            <person name="Nilsson R."/>
            <person name="Nishiguchi S."/>
            <person name="Nishikawa S."/>
            <person name="Nori F."/>
            <person name="Ohara O."/>
            <person name="Okazaki Y."/>
            <person name="Orlando V."/>
            <person name="Pang K.C."/>
            <person name="Pavan W.J."/>
            <person name="Pavesi G."/>
            <person name="Pesole G."/>
            <person name="Petrovsky N."/>
            <person name="Piazza S."/>
            <person name="Reed J."/>
            <person name="Reid J.F."/>
            <person name="Ring B.Z."/>
            <person name="Ringwald M."/>
            <person name="Rost B."/>
            <person name="Ruan Y."/>
            <person name="Salzberg S.L."/>
            <person name="Sandelin A."/>
            <person name="Schneider C."/>
            <person name="Schoenbach C."/>
            <person name="Sekiguchi K."/>
            <person name="Semple C.A."/>
            <person name="Seno S."/>
            <person name="Sessa L."/>
            <person name="Sheng Y."/>
            <person name="Shibata Y."/>
            <person name="Shimada H."/>
            <person name="Shimada K."/>
            <person name="Silva D."/>
            <person name="Sinclair B."/>
            <person name="Sperling S."/>
            <person name="Stupka E."/>
            <person name="Sugiura K."/>
            <person name="Sultana R."/>
            <person name="Takenaka Y."/>
            <person name="Taki K."/>
            <person name="Tammoja K."/>
            <person name="Tan S.L."/>
            <person name="Tang S."/>
            <person name="Taylor M.S."/>
            <person name="Tegner J."/>
            <person name="Teichmann S.A."/>
            <person name="Ueda H.R."/>
            <person name="van Nimwegen E."/>
            <person name="Verardo R."/>
            <person name="Wei C.L."/>
            <person name="Yagi K."/>
            <person name="Yamanishi H."/>
            <person name="Zabarovsky E."/>
            <person name="Zhu S."/>
            <person name="Zimmer A."/>
            <person name="Hide W."/>
            <person name="Bult C."/>
            <person name="Grimmond S.M."/>
            <person name="Teasdale R.D."/>
            <person name="Liu E.T."/>
            <person name="Brusic V."/>
            <person name="Quackenbush J."/>
            <person name="Wahlestedt C."/>
            <person name="Mattick J.S."/>
            <person name="Hume D.A."/>
            <person name="Kai C."/>
            <person name="Sasaki D."/>
            <person name="Tomaru Y."/>
            <person name="Fukuda S."/>
            <person name="Kanamori-Katayama M."/>
            <person name="Suzuki M."/>
            <person name="Aoki J."/>
            <person name="Arakawa T."/>
            <person name="Iida J."/>
            <person name="Imamura K."/>
            <person name="Itoh M."/>
            <person name="Kato T."/>
            <person name="Kawaji H."/>
            <person name="Kawagashira N."/>
            <person name="Kawashima T."/>
            <person name="Kojima M."/>
            <person name="Kondo S."/>
            <person name="Konno H."/>
            <person name="Nakano K."/>
            <person name="Ninomiya N."/>
            <person name="Nishio T."/>
            <person name="Okada M."/>
            <person name="Plessy C."/>
            <person name="Shibata K."/>
            <person name="Shiraki T."/>
            <person name="Suzuki S."/>
            <person name="Tagami M."/>
            <person name="Waki K."/>
            <person name="Watahiki A."/>
            <person name="Okamura-Oho Y."/>
            <person name="Suzuki H."/>
            <person name="Kawai J."/>
            <person name="Hayashizaki Y."/>
        </authorList>
    </citation>
    <scope>NUCLEOTIDE SEQUENCE [LARGE SCALE MRNA] OF 582-1169</scope>
    <source>
        <strain>C57BL/6J</strain>
        <tissue>Embryo</tissue>
    </source>
</reference>
<reference key="4">
    <citation type="journal article" date="2016" name="Nat. Commun.">
        <title>The Parkinson's disease-associated genes ATP13A2 and SYT11 regulate autophagy via a common pathway.</title>
        <authorList>
            <person name="Bento C.F."/>
            <person name="Ashkenazi A."/>
            <person name="Jimenez-Sanchez M."/>
            <person name="Rubinsztein D.C."/>
        </authorList>
    </citation>
    <scope>FUNCTION</scope>
</reference>
<reference key="5">
    <citation type="journal article" date="2019" name="J. Cell Biol.">
        <title>ATP13A2 facilitates HDAC6 recruitment to lysosome to promote autophagosome-lysosome fusion.</title>
        <authorList>
            <person name="Wang R."/>
            <person name="Tan J."/>
            <person name="Chen T."/>
            <person name="Han H."/>
            <person name="Tian R."/>
            <person name="Tan Y."/>
            <person name="Wu Y."/>
            <person name="Cui J."/>
            <person name="Chen F."/>
            <person name="Li J."/>
            <person name="Lv L."/>
            <person name="Guan X."/>
            <person name="Shang S."/>
            <person name="Lu J."/>
            <person name="Zhang Z."/>
        </authorList>
    </citation>
    <scope>FUNCTION</scope>
    <scope>DISRUPTION PHENOTYPE</scope>
</reference>
<keyword id="KW-0067">ATP-binding</keyword>
<keyword id="KW-0968">Cytoplasmic vesicle</keyword>
<keyword id="KW-0967">Endosome</keyword>
<keyword id="KW-0325">Glycoprotein</keyword>
<keyword id="KW-0458">Lysosome</keyword>
<keyword id="KW-0460">Magnesium</keyword>
<keyword id="KW-0472">Membrane</keyword>
<keyword id="KW-0479">Metal-binding</keyword>
<keyword id="KW-0547">Nucleotide-binding</keyword>
<keyword id="KW-0597">Phosphoprotein</keyword>
<keyword id="KW-1185">Reference proteome</keyword>
<keyword id="KW-1278">Translocase</keyword>
<keyword id="KW-0812">Transmembrane</keyword>
<keyword id="KW-1133">Transmembrane helix</keyword>
<keyword id="KW-0813">Transport</keyword>
<dbReference type="EC" id="7.6.2.-" evidence="2"/>
<dbReference type="EMBL" id="AL645625">
    <property type="status" value="NOT_ANNOTATED_CDS"/>
    <property type="molecule type" value="Genomic_DNA"/>
</dbReference>
<dbReference type="EMBL" id="BC042661">
    <property type="protein sequence ID" value="AAH42661.1"/>
    <property type="molecule type" value="mRNA"/>
</dbReference>
<dbReference type="EMBL" id="AK003623">
    <property type="protein sequence ID" value="BAB22896.1"/>
    <property type="molecule type" value="mRNA"/>
</dbReference>
<dbReference type="CCDS" id="CCDS18859.1"/>
<dbReference type="RefSeq" id="NP_083373.2">
    <property type="nucleotide sequence ID" value="NM_029097.3"/>
</dbReference>
<dbReference type="SMR" id="Q9CTG6"/>
<dbReference type="BioGRID" id="217008">
    <property type="interactions" value="1"/>
</dbReference>
<dbReference type="FunCoup" id="Q9CTG6">
    <property type="interactions" value="1129"/>
</dbReference>
<dbReference type="STRING" id="10090.ENSMUSP00000039648"/>
<dbReference type="GlyCosmos" id="Q9CTG6">
    <property type="glycosylation" value="1 site, No reported glycans"/>
</dbReference>
<dbReference type="GlyGen" id="Q9CTG6">
    <property type="glycosylation" value="2 sites"/>
</dbReference>
<dbReference type="iPTMnet" id="Q9CTG6"/>
<dbReference type="PhosphoSitePlus" id="Q9CTG6"/>
<dbReference type="SwissPalm" id="Q9CTG6"/>
<dbReference type="PaxDb" id="10090-ENSMUSP00000039648"/>
<dbReference type="ProteomicsDB" id="277083"/>
<dbReference type="Antibodypedia" id="29290">
    <property type="antibodies" value="196 antibodies from 24 providers"/>
</dbReference>
<dbReference type="DNASU" id="74772"/>
<dbReference type="Ensembl" id="ENSMUST00000037055.14">
    <property type="protein sequence ID" value="ENSMUSP00000039648.8"/>
    <property type="gene ID" value="ENSMUSG00000036622.16"/>
</dbReference>
<dbReference type="GeneID" id="74772"/>
<dbReference type="KEGG" id="mmu:74772"/>
<dbReference type="UCSC" id="uc008vnn.2">
    <property type="organism name" value="mouse"/>
</dbReference>
<dbReference type="AGR" id="MGI:1922022"/>
<dbReference type="CTD" id="23400"/>
<dbReference type="MGI" id="MGI:1922022">
    <property type="gene designation" value="Atp13a2"/>
</dbReference>
<dbReference type="VEuPathDB" id="HostDB:ENSMUSG00000036622"/>
<dbReference type="eggNOG" id="KOG0208">
    <property type="taxonomic scope" value="Eukaryota"/>
</dbReference>
<dbReference type="GeneTree" id="ENSGT00940000159714"/>
<dbReference type="InParanoid" id="Q9CTG6"/>
<dbReference type="OMA" id="SGWKDPL"/>
<dbReference type="OrthoDB" id="48943at2759"/>
<dbReference type="PhylomeDB" id="Q9CTG6"/>
<dbReference type="TreeFam" id="TF300331"/>
<dbReference type="Reactome" id="R-MMU-936837">
    <property type="pathway name" value="Ion transport by P-type ATPases"/>
</dbReference>
<dbReference type="BioGRID-ORCS" id="74772">
    <property type="hits" value="2 hits in 78 CRISPR screens"/>
</dbReference>
<dbReference type="ChiTaRS" id="Atp13a2">
    <property type="organism name" value="mouse"/>
</dbReference>
<dbReference type="PRO" id="PR:Q9CTG6"/>
<dbReference type="Proteomes" id="UP000000589">
    <property type="component" value="Chromosome 4"/>
</dbReference>
<dbReference type="RNAct" id="Q9CTG6">
    <property type="molecule type" value="protein"/>
</dbReference>
<dbReference type="Bgee" id="ENSMUSG00000036622">
    <property type="expression patterns" value="Expressed in embryonic brain and 255 other cell types or tissues"/>
</dbReference>
<dbReference type="ExpressionAtlas" id="Q9CTG6">
    <property type="expression patterns" value="baseline and differential"/>
</dbReference>
<dbReference type="GO" id="GO:0000421">
    <property type="term" value="C:autophagosome membrane"/>
    <property type="evidence" value="ECO:0007669"/>
    <property type="project" value="UniProtKB-SubCell"/>
</dbReference>
<dbReference type="GO" id="GO:0031902">
    <property type="term" value="C:late endosome membrane"/>
    <property type="evidence" value="ECO:0000250"/>
    <property type="project" value="UniProtKB"/>
</dbReference>
<dbReference type="GO" id="GO:0005765">
    <property type="term" value="C:lysosomal membrane"/>
    <property type="evidence" value="ECO:0000250"/>
    <property type="project" value="UniProtKB"/>
</dbReference>
<dbReference type="GO" id="GO:0005764">
    <property type="term" value="C:lysosome"/>
    <property type="evidence" value="ECO:0000250"/>
    <property type="project" value="UniProtKB"/>
</dbReference>
<dbReference type="GO" id="GO:0032585">
    <property type="term" value="C:multivesicular body membrane"/>
    <property type="evidence" value="ECO:0007669"/>
    <property type="project" value="UniProtKB-SubCell"/>
</dbReference>
<dbReference type="GO" id="GO:0043005">
    <property type="term" value="C:neuron projection"/>
    <property type="evidence" value="ECO:0000314"/>
    <property type="project" value="ParkinsonsUK-UCL"/>
</dbReference>
<dbReference type="GO" id="GO:0043025">
    <property type="term" value="C:neuronal cell body"/>
    <property type="evidence" value="ECO:0000314"/>
    <property type="project" value="ParkinsonsUK-UCL"/>
</dbReference>
<dbReference type="GO" id="GO:0030133">
    <property type="term" value="C:transport vesicle"/>
    <property type="evidence" value="ECO:0007669"/>
    <property type="project" value="Ensembl"/>
</dbReference>
<dbReference type="GO" id="GO:0012506">
    <property type="term" value="C:vesicle membrane"/>
    <property type="evidence" value="ECO:0000314"/>
    <property type="project" value="CACAO"/>
</dbReference>
<dbReference type="GO" id="GO:0015417">
    <property type="term" value="F:ABC-type polyamine transporter activity"/>
    <property type="evidence" value="ECO:0007669"/>
    <property type="project" value="RHEA"/>
</dbReference>
<dbReference type="GO" id="GO:0005524">
    <property type="term" value="F:ATP binding"/>
    <property type="evidence" value="ECO:0007669"/>
    <property type="project" value="UniProtKB-KW"/>
</dbReference>
<dbReference type="GO" id="GO:0016887">
    <property type="term" value="F:ATP hydrolysis activity"/>
    <property type="evidence" value="ECO:0007669"/>
    <property type="project" value="InterPro"/>
</dbReference>
<dbReference type="GO" id="GO:0019829">
    <property type="term" value="F:ATPase-coupled monoatomic cation transmembrane transporter activity"/>
    <property type="evidence" value="ECO:0007669"/>
    <property type="project" value="InterPro"/>
</dbReference>
<dbReference type="GO" id="GO:0046872">
    <property type="term" value="F:metal ion binding"/>
    <property type="evidence" value="ECO:0007669"/>
    <property type="project" value="UniProtKB-KW"/>
</dbReference>
<dbReference type="GO" id="GO:0015662">
    <property type="term" value="F:P-type ion transporter activity"/>
    <property type="evidence" value="ECO:0007669"/>
    <property type="project" value="InterPro"/>
</dbReference>
<dbReference type="GO" id="GO:0070300">
    <property type="term" value="F:phosphatidic acid binding"/>
    <property type="evidence" value="ECO:0007669"/>
    <property type="project" value="Ensembl"/>
</dbReference>
<dbReference type="GO" id="GO:0080025">
    <property type="term" value="F:phosphatidylinositol-3,5-bisphosphate binding"/>
    <property type="evidence" value="ECO:0007669"/>
    <property type="project" value="Ensembl"/>
</dbReference>
<dbReference type="GO" id="GO:0015203">
    <property type="term" value="F:polyamine transmembrane transporter activity"/>
    <property type="evidence" value="ECO:0000250"/>
    <property type="project" value="UniProtKB"/>
</dbReference>
<dbReference type="GO" id="GO:0061909">
    <property type="term" value="P:autophagosome-lysosome fusion"/>
    <property type="evidence" value="ECO:0000315"/>
    <property type="project" value="UniProtKB"/>
</dbReference>
<dbReference type="GO" id="GO:0006914">
    <property type="term" value="P:autophagy"/>
    <property type="evidence" value="ECO:0000315"/>
    <property type="project" value="UniProtKB"/>
</dbReference>
<dbReference type="GO" id="GO:0071287">
    <property type="term" value="P:cellular response to manganese ion"/>
    <property type="evidence" value="ECO:0007669"/>
    <property type="project" value="Ensembl"/>
</dbReference>
<dbReference type="GO" id="GO:0034599">
    <property type="term" value="P:cellular response to oxidative stress"/>
    <property type="evidence" value="ECO:0000315"/>
    <property type="project" value="ParkinsonsUK-UCL"/>
</dbReference>
<dbReference type="GO" id="GO:0097734">
    <property type="term" value="P:extracellular exosome biogenesis"/>
    <property type="evidence" value="ECO:0007669"/>
    <property type="project" value="Ensembl"/>
</dbReference>
<dbReference type="GO" id="GO:0006874">
    <property type="term" value="P:intracellular calcium ion homeostasis"/>
    <property type="evidence" value="ECO:0007669"/>
    <property type="project" value="Ensembl"/>
</dbReference>
<dbReference type="GO" id="GO:0006879">
    <property type="term" value="P:intracellular iron ion homeostasis"/>
    <property type="evidence" value="ECO:0007669"/>
    <property type="project" value="Ensembl"/>
</dbReference>
<dbReference type="GO" id="GO:0006882">
    <property type="term" value="P:intracellular zinc ion homeostasis"/>
    <property type="evidence" value="ECO:0000315"/>
    <property type="project" value="ParkinsonsUK-UCL"/>
</dbReference>
<dbReference type="GO" id="GO:0055088">
    <property type="term" value="P:lipid homeostasis"/>
    <property type="evidence" value="ECO:0000250"/>
    <property type="project" value="UniProtKB"/>
</dbReference>
<dbReference type="GO" id="GO:0007041">
    <property type="term" value="P:lysosomal transport"/>
    <property type="evidence" value="ECO:0000250"/>
    <property type="project" value="UniProtKB"/>
</dbReference>
<dbReference type="GO" id="GO:1903543">
    <property type="term" value="P:positive regulation of exosomal secretion"/>
    <property type="evidence" value="ECO:0000315"/>
    <property type="project" value="ParkinsonsUK-UCL"/>
</dbReference>
<dbReference type="GO" id="GO:0010628">
    <property type="term" value="P:positive regulation of gene expression"/>
    <property type="evidence" value="ECO:0007669"/>
    <property type="project" value="Ensembl"/>
</dbReference>
<dbReference type="GO" id="GO:0050714">
    <property type="term" value="P:positive regulation of protein secretion"/>
    <property type="evidence" value="ECO:0007669"/>
    <property type="project" value="Ensembl"/>
</dbReference>
<dbReference type="GO" id="GO:0061462">
    <property type="term" value="P:protein localization to lysosome"/>
    <property type="evidence" value="ECO:0000315"/>
    <property type="project" value="UniProtKB"/>
</dbReference>
<dbReference type="GO" id="GO:0016243">
    <property type="term" value="P:regulation of autophagosome size"/>
    <property type="evidence" value="ECO:0007669"/>
    <property type="project" value="Ensembl"/>
</dbReference>
<dbReference type="GO" id="GO:0033157">
    <property type="term" value="P:regulation of intracellular protein transport"/>
    <property type="evidence" value="ECO:0000303"/>
    <property type="project" value="ParkinsonsUK-UCL"/>
</dbReference>
<dbReference type="GO" id="GO:1905165">
    <property type="term" value="P:regulation of lysosomal protein catabolic process"/>
    <property type="evidence" value="ECO:0000315"/>
    <property type="project" value="ParkinsonsUK-UCL"/>
</dbReference>
<dbReference type="GO" id="GO:0016241">
    <property type="term" value="P:regulation of macroautophagy"/>
    <property type="evidence" value="ECO:0007669"/>
    <property type="project" value="Ensembl"/>
</dbReference>
<dbReference type="GO" id="GO:0010821">
    <property type="term" value="P:regulation of mitochondrion organization"/>
    <property type="evidence" value="ECO:0000315"/>
    <property type="project" value="ParkinsonsUK-UCL"/>
</dbReference>
<dbReference type="GO" id="GO:1900180">
    <property type="term" value="P:regulation of protein localization to nucleus"/>
    <property type="evidence" value="ECO:0000315"/>
    <property type="project" value="UniProtKB"/>
</dbReference>
<dbReference type="GO" id="GO:2000152">
    <property type="term" value="P:regulation of ubiquitin-specific protease activity"/>
    <property type="evidence" value="ECO:0000250"/>
    <property type="project" value="UniProtKB"/>
</dbReference>
<dbReference type="GO" id="GO:1903710">
    <property type="term" value="P:spermine transmembrane transport"/>
    <property type="evidence" value="ECO:0000250"/>
    <property type="project" value="UniProtKB"/>
</dbReference>
<dbReference type="CDD" id="cd07542">
    <property type="entry name" value="P-type_ATPase_cation"/>
    <property type="match status" value="1"/>
</dbReference>
<dbReference type="FunFam" id="1.20.1110.10:FF:000023">
    <property type="entry name" value="Cation-transporting ATPase"/>
    <property type="match status" value="1"/>
</dbReference>
<dbReference type="FunFam" id="2.70.150.10:FF:000060">
    <property type="entry name" value="Cation-transporting ATPase"/>
    <property type="match status" value="1"/>
</dbReference>
<dbReference type="FunFam" id="3.40.1110.10:FF:000026">
    <property type="entry name" value="Cation-transporting ATPase"/>
    <property type="match status" value="1"/>
</dbReference>
<dbReference type="FunFam" id="3.40.50.1000:FF:000068">
    <property type="entry name" value="Cation-transporting ATPase"/>
    <property type="match status" value="1"/>
</dbReference>
<dbReference type="Gene3D" id="3.40.1110.10">
    <property type="entry name" value="Calcium-transporting ATPase, cytoplasmic domain N"/>
    <property type="match status" value="1"/>
</dbReference>
<dbReference type="Gene3D" id="2.70.150.10">
    <property type="entry name" value="Calcium-transporting ATPase, cytoplasmic transduction domain A"/>
    <property type="match status" value="1"/>
</dbReference>
<dbReference type="Gene3D" id="1.20.1110.10">
    <property type="entry name" value="Calcium-transporting ATPase, transmembrane domain"/>
    <property type="match status" value="1"/>
</dbReference>
<dbReference type="Gene3D" id="3.40.50.1000">
    <property type="entry name" value="HAD superfamily/HAD-like"/>
    <property type="match status" value="1"/>
</dbReference>
<dbReference type="InterPro" id="IPR023299">
    <property type="entry name" value="ATPase_P-typ_cyto_dom_N"/>
</dbReference>
<dbReference type="InterPro" id="IPR018303">
    <property type="entry name" value="ATPase_P-typ_P_site"/>
</dbReference>
<dbReference type="InterPro" id="IPR023298">
    <property type="entry name" value="ATPase_P-typ_TM_dom_sf"/>
</dbReference>
<dbReference type="InterPro" id="IPR008250">
    <property type="entry name" value="ATPase_P-typ_transduc_dom_A_sf"/>
</dbReference>
<dbReference type="InterPro" id="IPR036412">
    <property type="entry name" value="HAD-like_sf"/>
</dbReference>
<dbReference type="InterPro" id="IPR023214">
    <property type="entry name" value="HAD_sf"/>
</dbReference>
<dbReference type="InterPro" id="IPR006544">
    <property type="entry name" value="P-type_TPase_V"/>
</dbReference>
<dbReference type="InterPro" id="IPR047819">
    <property type="entry name" value="P5A-ATPase_N"/>
</dbReference>
<dbReference type="InterPro" id="IPR047821">
    <property type="entry name" value="P5B-type_ATPase"/>
</dbReference>
<dbReference type="InterPro" id="IPR001757">
    <property type="entry name" value="P_typ_ATPase"/>
</dbReference>
<dbReference type="InterPro" id="IPR044492">
    <property type="entry name" value="P_typ_ATPase_HD_dom"/>
</dbReference>
<dbReference type="NCBIfam" id="TIGR01494">
    <property type="entry name" value="ATPase_P-type"/>
    <property type="match status" value="2"/>
</dbReference>
<dbReference type="NCBIfam" id="TIGR01657">
    <property type="entry name" value="P-ATPase-V"/>
    <property type="match status" value="1"/>
</dbReference>
<dbReference type="PANTHER" id="PTHR45630">
    <property type="entry name" value="CATION-TRANSPORTING ATPASE-RELATED"/>
    <property type="match status" value="1"/>
</dbReference>
<dbReference type="PANTHER" id="PTHR45630:SF2">
    <property type="entry name" value="POLYAMINE-TRANSPORTING ATPASE 13A2"/>
    <property type="match status" value="1"/>
</dbReference>
<dbReference type="Pfam" id="PF00122">
    <property type="entry name" value="E1-E2_ATPase"/>
    <property type="match status" value="1"/>
</dbReference>
<dbReference type="Pfam" id="PF12409">
    <property type="entry name" value="P5-ATPase"/>
    <property type="match status" value="1"/>
</dbReference>
<dbReference type="PRINTS" id="PR00119">
    <property type="entry name" value="CATATPASE"/>
</dbReference>
<dbReference type="PRINTS" id="PR00120">
    <property type="entry name" value="HATPASE"/>
</dbReference>
<dbReference type="SFLD" id="SFLDG00002">
    <property type="entry name" value="C1.7:_P-type_atpase_like"/>
    <property type="match status" value="1"/>
</dbReference>
<dbReference type="SFLD" id="SFLDF00027">
    <property type="entry name" value="p-type_atpase"/>
    <property type="match status" value="1"/>
</dbReference>
<dbReference type="SUPFAM" id="SSF81653">
    <property type="entry name" value="Calcium ATPase, transduction domain A"/>
    <property type="match status" value="1"/>
</dbReference>
<dbReference type="SUPFAM" id="SSF81665">
    <property type="entry name" value="Calcium ATPase, transmembrane domain M"/>
    <property type="match status" value="1"/>
</dbReference>
<dbReference type="SUPFAM" id="SSF56784">
    <property type="entry name" value="HAD-like"/>
    <property type="match status" value="1"/>
</dbReference>
<dbReference type="SUPFAM" id="SSF81660">
    <property type="entry name" value="Metal cation-transporting ATPase, ATP-binding domain N"/>
    <property type="match status" value="1"/>
</dbReference>
<dbReference type="PROSITE" id="PS00154">
    <property type="entry name" value="ATPASE_E1_E2"/>
    <property type="match status" value="1"/>
</dbReference>
<proteinExistence type="evidence at transcript level"/>